<evidence type="ECO:0000255" key="1">
    <source>
        <dbReference type="HAMAP-Rule" id="MF_00318"/>
    </source>
</evidence>
<sequence length="426" mass="44808">MSAIVDIVAREILDSRGNPTVEVDVELASGAKGRAAVPSGASTGAHEAVELRDGDKSRFGGKGVLKAVEHVETEILEALQGAESMDQVAIDEAMIDLDGTPNKARLGANAILAVSLAVAKASAEELQIPLYRYVGGVYARTLPVPMMNIVNGGQHADNPIDIQEFMIQPVGAPTLADAVRVGSEIFAQLKKNLSAAGHNTNVGDEGGFAPGLKSADDALGFITKAVEAAGYRPGDDVTFALDCAATEFYRDGLYVMEGEGKTLDSAGMVAYLADLAARYPIVSIEDGLAEDDWEGWAVLTATLGKTVQLVGDDLFVTNPDRLRRGIKAGVANSLLVKVNQIGTLSETLEAVETAQRAGYTAVMSHRSGETEDSTIADLAVATNCGQIKTGSLSRSDRTAKYNQLIRIENELATAARYAGRTILKTA</sequence>
<reference key="1">
    <citation type="journal article" date="2009" name="BMC Genomics">
        <title>Complete genome sequence of the sugarcane nitrogen-fixing endophyte Gluconacetobacter diazotrophicus Pal5.</title>
        <authorList>
            <person name="Bertalan M."/>
            <person name="Albano R."/>
            <person name="de Padua V."/>
            <person name="Rouws L."/>
            <person name="Rojas C."/>
            <person name="Hemerly A."/>
            <person name="Teixeira K."/>
            <person name="Schwab S."/>
            <person name="Araujo J."/>
            <person name="Oliveira A."/>
            <person name="Franca L."/>
            <person name="Magalhaes V."/>
            <person name="Alqueres S."/>
            <person name="Cardoso A."/>
            <person name="Almeida W."/>
            <person name="Loureiro M.M."/>
            <person name="Nogueira E."/>
            <person name="Cidade D."/>
            <person name="Oliveira D."/>
            <person name="Simao T."/>
            <person name="Macedo J."/>
            <person name="Valadao A."/>
            <person name="Dreschsel M."/>
            <person name="Freitas F."/>
            <person name="Vidal M."/>
            <person name="Guedes H."/>
            <person name="Rodrigues E."/>
            <person name="Meneses C."/>
            <person name="Brioso P."/>
            <person name="Pozzer L."/>
            <person name="Figueiredo D."/>
            <person name="Montano H."/>
            <person name="Junior J."/>
            <person name="de Souza Filho G."/>
            <person name="Martin Quintana Flores V."/>
            <person name="Ferreira B."/>
            <person name="Branco A."/>
            <person name="Gonzalez P."/>
            <person name="Guillobel H."/>
            <person name="Lemos M."/>
            <person name="Seibel L."/>
            <person name="Macedo J."/>
            <person name="Alves-Ferreira M."/>
            <person name="Sachetto-Martins G."/>
            <person name="Coelho A."/>
            <person name="Santos E."/>
            <person name="Amaral G."/>
            <person name="Neves A."/>
            <person name="Pacheco A.B."/>
            <person name="Carvalho D."/>
            <person name="Lery L."/>
            <person name="Bisch P."/>
            <person name="Rossle S.C."/>
            <person name="Urmenyi T."/>
            <person name="Rael Pereira A."/>
            <person name="Silva R."/>
            <person name="Rondinelli E."/>
            <person name="von Kruger W."/>
            <person name="Martins O."/>
            <person name="Baldani J.I."/>
            <person name="Ferreira P.C."/>
        </authorList>
    </citation>
    <scope>NUCLEOTIDE SEQUENCE [LARGE SCALE GENOMIC DNA]</scope>
    <source>
        <strain>ATCC 49037 / DSM 5601 / CCUG 37298 / CIP 103539 / LMG 7603 / PAl5</strain>
    </source>
</reference>
<reference key="2">
    <citation type="journal article" date="2010" name="Stand. Genomic Sci.">
        <title>Two genome sequences of the same bacterial strain, Gluconacetobacter diazotrophicus PAl 5, suggest a new standard in genome sequence submission.</title>
        <authorList>
            <person name="Giongo A."/>
            <person name="Tyler H.L."/>
            <person name="Zipperer U.N."/>
            <person name="Triplett E.W."/>
        </authorList>
    </citation>
    <scope>NUCLEOTIDE SEQUENCE [LARGE SCALE GENOMIC DNA]</scope>
    <source>
        <strain>ATCC 49037 / DSM 5601 / CCUG 37298 / CIP 103539 / LMG 7603 / PAl5</strain>
    </source>
</reference>
<proteinExistence type="inferred from homology"/>
<comment type="function">
    <text evidence="1">Catalyzes the reversible conversion of 2-phosphoglycerate (2-PG) into phosphoenolpyruvate (PEP). It is essential for the degradation of carbohydrates via glycolysis.</text>
</comment>
<comment type="catalytic activity">
    <reaction evidence="1">
        <text>(2R)-2-phosphoglycerate = phosphoenolpyruvate + H2O</text>
        <dbReference type="Rhea" id="RHEA:10164"/>
        <dbReference type="ChEBI" id="CHEBI:15377"/>
        <dbReference type="ChEBI" id="CHEBI:58289"/>
        <dbReference type="ChEBI" id="CHEBI:58702"/>
        <dbReference type="EC" id="4.2.1.11"/>
    </reaction>
</comment>
<comment type="cofactor">
    <cofactor evidence="1">
        <name>Mg(2+)</name>
        <dbReference type="ChEBI" id="CHEBI:18420"/>
    </cofactor>
    <text evidence="1">Binds a second Mg(2+) ion via substrate during catalysis.</text>
</comment>
<comment type="pathway">
    <text evidence="1">Carbohydrate degradation; glycolysis; pyruvate from D-glyceraldehyde 3-phosphate: step 4/5.</text>
</comment>
<comment type="subcellular location">
    <subcellularLocation>
        <location evidence="1">Cytoplasm</location>
    </subcellularLocation>
    <subcellularLocation>
        <location evidence="1">Secreted</location>
    </subcellularLocation>
    <subcellularLocation>
        <location evidence="1">Cell surface</location>
    </subcellularLocation>
    <text evidence="1">Fractions of enolase are present in both the cytoplasm and on the cell surface.</text>
</comment>
<comment type="similarity">
    <text evidence="1">Belongs to the enolase family.</text>
</comment>
<keyword id="KW-0963">Cytoplasm</keyword>
<keyword id="KW-0324">Glycolysis</keyword>
<keyword id="KW-0456">Lyase</keyword>
<keyword id="KW-0460">Magnesium</keyword>
<keyword id="KW-0479">Metal-binding</keyword>
<keyword id="KW-1185">Reference proteome</keyword>
<keyword id="KW-0964">Secreted</keyword>
<protein>
    <recommendedName>
        <fullName evidence="1">Enolase</fullName>
        <ecNumber evidence="1">4.2.1.11</ecNumber>
    </recommendedName>
    <alternativeName>
        <fullName evidence="1">2-phospho-D-glycerate hydro-lyase</fullName>
    </alternativeName>
    <alternativeName>
        <fullName evidence="1">2-phosphoglycerate dehydratase</fullName>
    </alternativeName>
</protein>
<dbReference type="EC" id="4.2.1.11" evidence="1"/>
<dbReference type="EMBL" id="AM889285">
    <property type="protein sequence ID" value="CAP55870.1"/>
    <property type="molecule type" value="Genomic_DNA"/>
</dbReference>
<dbReference type="EMBL" id="CP001189">
    <property type="protein sequence ID" value="ACI49949.1"/>
    <property type="molecule type" value="Genomic_DNA"/>
</dbReference>
<dbReference type="RefSeq" id="WP_012225559.1">
    <property type="nucleotide sequence ID" value="NC_010125.1"/>
</dbReference>
<dbReference type="SMR" id="A9HJ75"/>
<dbReference type="STRING" id="272568.GDI1927"/>
<dbReference type="KEGG" id="gdi:GDI1927"/>
<dbReference type="KEGG" id="gdj:Gdia_0149"/>
<dbReference type="eggNOG" id="COG0148">
    <property type="taxonomic scope" value="Bacteria"/>
</dbReference>
<dbReference type="HOGENOM" id="CLU_031223_2_1_5"/>
<dbReference type="OrthoDB" id="9804716at2"/>
<dbReference type="UniPathway" id="UPA00109">
    <property type="reaction ID" value="UER00187"/>
</dbReference>
<dbReference type="Proteomes" id="UP000001176">
    <property type="component" value="Chromosome"/>
</dbReference>
<dbReference type="GO" id="GO:0009986">
    <property type="term" value="C:cell surface"/>
    <property type="evidence" value="ECO:0007669"/>
    <property type="project" value="UniProtKB-SubCell"/>
</dbReference>
<dbReference type="GO" id="GO:0005576">
    <property type="term" value="C:extracellular region"/>
    <property type="evidence" value="ECO:0007669"/>
    <property type="project" value="UniProtKB-SubCell"/>
</dbReference>
<dbReference type="GO" id="GO:0000015">
    <property type="term" value="C:phosphopyruvate hydratase complex"/>
    <property type="evidence" value="ECO:0007669"/>
    <property type="project" value="InterPro"/>
</dbReference>
<dbReference type="GO" id="GO:0000287">
    <property type="term" value="F:magnesium ion binding"/>
    <property type="evidence" value="ECO:0007669"/>
    <property type="project" value="UniProtKB-UniRule"/>
</dbReference>
<dbReference type="GO" id="GO:0004634">
    <property type="term" value="F:phosphopyruvate hydratase activity"/>
    <property type="evidence" value="ECO:0007669"/>
    <property type="project" value="UniProtKB-UniRule"/>
</dbReference>
<dbReference type="GO" id="GO:0006096">
    <property type="term" value="P:glycolytic process"/>
    <property type="evidence" value="ECO:0007669"/>
    <property type="project" value="UniProtKB-UniRule"/>
</dbReference>
<dbReference type="CDD" id="cd03313">
    <property type="entry name" value="enolase"/>
    <property type="match status" value="1"/>
</dbReference>
<dbReference type="FunFam" id="3.20.20.120:FF:000001">
    <property type="entry name" value="Enolase"/>
    <property type="match status" value="1"/>
</dbReference>
<dbReference type="FunFam" id="3.30.390.10:FF:000001">
    <property type="entry name" value="Enolase"/>
    <property type="match status" value="1"/>
</dbReference>
<dbReference type="Gene3D" id="3.20.20.120">
    <property type="entry name" value="Enolase-like C-terminal domain"/>
    <property type="match status" value="1"/>
</dbReference>
<dbReference type="Gene3D" id="3.30.390.10">
    <property type="entry name" value="Enolase-like, N-terminal domain"/>
    <property type="match status" value="1"/>
</dbReference>
<dbReference type="HAMAP" id="MF_00318">
    <property type="entry name" value="Enolase"/>
    <property type="match status" value="1"/>
</dbReference>
<dbReference type="InterPro" id="IPR000941">
    <property type="entry name" value="Enolase"/>
</dbReference>
<dbReference type="InterPro" id="IPR036849">
    <property type="entry name" value="Enolase-like_C_sf"/>
</dbReference>
<dbReference type="InterPro" id="IPR029017">
    <property type="entry name" value="Enolase-like_N"/>
</dbReference>
<dbReference type="InterPro" id="IPR020810">
    <property type="entry name" value="Enolase_C"/>
</dbReference>
<dbReference type="InterPro" id="IPR020809">
    <property type="entry name" value="Enolase_CS"/>
</dbReference>
<dbReference type="InterPro" id="IPR020811">
    <property type="entry name" value="Enolase_N"/>
</dbReference>
<dbReference type="NCBIfam" id="TIGR01060">
    <property type="entry name" value="eno"/>
    <property type="match status" value="1"/>
</dbReference>
<dbReference type="PANTHER" id="PTHR11902">
    <property type="entry name" value="ENOLASE"/>
    <property type="match status" value="1"/>
</dbReference>
<dbReference type="PANTHER" id="PTHR11902:SF1">
    <property type="entry name" value="ENOLASE"/>
    <property type="match status" value="1"/>
</dbReference>
<dbReference type="Pfam" id="PF00113">
    <property type="entry name" value="Enolase_C"/>
    <property type="match status" value="1"/>
</dbReference>
<dbReference type="Pfam" id="PF03952">
    <property type="entry name" value="Enolase_N"/>
    <property type="match status" value="1"/>
</dbReference>
<dbReference type="PIRSF" id="PIRSF001400">
    <property type="entry name" value="Enolase"/>
    <property type="match status" value="1"/>
</dbReference>
<dbReference type="PRINTS" id="PR00148">
    <property type="entry name" value="ENOLASE"/>
</dbReference>
<dbReference type="SFLD" id="SFLDF00002">
    <property type="entry name" value="enolase"/>
    <property type="match status" value="1"/>
</dbReference>
<dbReference type="SFLD" id="SFLDG00178">
    <property type="entry name" value="enolase"/>
    <property type="match status" value="1"/>
</dbReference>
<dbReference type="SMART" id="SM01192">
    <property type="entry name" value="Enolase_C"/>
    <property type="match status" value="1"/>
</dbReference>
<dbReference type="SMART" id="SM01193">
    <property type="entry name" value="Enolase_N"/>
    <property type="match status" value="1"/>
</dbReference>
<dbReference type="SUPFAM" id="SSF51604">
    <property type="entry name" value="Enolase C-terminal domain-like"/>
    <property type="match status" value="1"/>
</dbReference>
<dbReference type="SUPFAM" id="SSF54826">
    <property type="entry name" value="Enolase N-terminal domain-like"/>
    <property type="match status" value="1"/>
</dbReference>
<dbReference type="PROSITE" id="PS00164">
    <property type="entry name" value="ENOLASE"/>
    <property type="match status" value="1"/>
</dbReference>
<gene>
    <name evidence="1" type="primary">eno</name>
    <name type="ordered locus">GDI1927</name>
    <name type="ordered locus">Gdia_0149</name>
</gene>
<organism>
    <name type="scientific">Gluconacetobacter diazotrophicus (strain ATCC 49037 / DSM 5601 / CCUG 37298 / CIP 103539 / LMG 7603 / PAl5)</name>
    <dbReference type="NCBI Taxonomy" id="272568"/>
    <lineage>
        <taxon>Bacteria</taxon>
        <taxon>Pseudomonadati</taxon>
        <taxon>Pseudomonadota</taxon>
        <taxon>Alphaproteobacteria</taxon>
        <taxon>Acetobacterales</taxon>
        <taxon>Acetobacteraceae</taxon>
        <taxon>Gluconacetobacter</taxon>
    </lineage>
</organism>
<name>ENO_GLUDA</name>
<accession>A9HJ75</accession>
<accession>B5ZK10</accession>
<feature type="chain" id="PRO_1000079137" description="Enolase">
    <location>
        <begin position="1"/>
        <end position="426"/>
    </location>
</feature>
<feature type="active site" description="Proton donor" evidence="1">
    <location>
        <position position="205"/>
    </location>
</feature>
<feature type="active site" description="Proton acceptor" evidence="1">
    <location>
        <position position="337"/>
    </location>
</feature>
<feature type="binding site" evidence="1">
    <location>
        <position position="163"/>
    </location>
    <ligand>
        <name>(2R)-2-phosphoglycerate</name>
        <dbReference type="ChEBI" id="CHEBI:58289"/>
    </ligand>
</feature>
<feature type="binding site" evidence="1">
    <location>
        <position position="242"/>
    </location>
    <ligand>
        <name>Mg(2+)</name>
        <dbReference type="ChEBI" id="CHEBI:18420"/>
    </ligand>
</feature>
<feature type="binding site" evidence="1">
    <location>
        <position position="285"/>
    </location>
    <ligand>
        <name>Mg(2+)</name>
        <dbReference type="ChEBI" id="CHEBI:18420"/>
    </ligand>
</feature>
<feature type="binding site" evidence="1">
    <location>
        <position position="312"/>
    </location>
    <ligand>
        <name>Mg(2+)</name>
        <dbReference type="ChEBI" id="CHEBI:18420"/>
    </ligand>
</feature>
<feature type="binding site" evidence="1">
    <location>
        <position position="337"/>
    </location>
    <ligand>
        <name>(2R)-2-phosphoglycerate</name>
        <dbReference type="ChEBI" id="CHEBI:58289"/>
    </ligand>
</feature>
<feature type="binding site" evidence="1">
    <location>
        <position position="366"/>
    </location>
    <ligand>
        <name>(2R)-2-phosphoglycerate</name>
        <dbReference type="ChEBI" id="CHEBI:58289"/>
    </ligand>
</feature>
<feature type="binding site" evidence="1">
    <location>
        <position position="367"/>
    </location>
    <ligand>
        <name>(2R)-2-phosphoglycerate</name>
        <dbReference type="ChEBI" id="CHEBI:58289"/>
    </ligand>
</feature>
<feature type="binding site" evidence="1">
    <location>
        <position position="388"/>
    </location>
    <ligand>
        <name>(2R)-2-phosphoglycerate</name>
        <dbReference type="ChEBI" id="CHEBI:58289"/>
    </ligand>
</feature>